<evidence type="ECO:0000255" key="1">
    <source>
        <dbReference type="HAMAP-Rule" id="MF_00270"/>
    </source>
</evidence>
<evidence type="ECO:0000305" key="2"/>
<proteinExistence type="inferred from homology"/>
<accession>Q31FW5</accession>
<gene>
    <name evidence="1" type="primary">rpsR</name>
    <name type="ordered locus">Tcr_1363</name>
</gene>
<keyword id="KW-0687">Ribonucleoprotein</keyword>
<keyword id="KW-0689">Ribosomal protein</keyword>
<keyword id="KW-0694">RNA-binding</keyword>
<keyword id="KW-0699">rRNA-binding</keyword>
<reference key="1">
    <citation type="journal article" date="2006" name="PLoS Biol.">
        <title>The genome of deep-sea vent chemolithoautotroph Thiomicrospira crunogena XCL-2.</title>
        <authorList>
            <person name="Scott K.M."/>
            <person name="Sievert S.M."/>
            <person name="Abril F.N."/>
            <person name="Ball L.A."/>
            <person name="Barrett C.J."/>
            <person name="Blake R.A."/>
            <person name="Boller A.J."/>
            <person name="Chain P.S.G."/>
            <person name="Clark J.A."/>
            <person name="Davis C.R."/>
            <person name="Detter C."/>
            <person name="Do K.F."/>
            <person name="Dobrinski K.P."/>
            <person name="Faza B.I."/>
            <person name="Fitzpatrick K.A."/>
            <person name="Freyermuth S.K."/>
            <person name="Harmer T.L."/>
            <person name="Hauser L.J."/>
            <person name="Huegler M."/>
            <person name="Kerfeld C.A."/>
            <person name="Klotz M.G."/>
            <person name="Kong W.W."/>
            <person name="Land M."/>
            <person name="Lapidus A."/>
            <person name="Larimer F.W."/>
            <person name="Longo D.L."/>
            <person name="Lucas S."/>
            <person name="Malfatti S.A."/>
            <person name="Massey S.E."/>
            <person name="Martin D.D."/>
            <person name="McCuddin Z."/>
            <person name="Meyer F."/>
            <person name="Moore J.L."/>
            <person name="Ocampo L.H. Jr."/>
            <person name="Paul J.H."/>
            <person name="Paulsen I.T."/>
            <person name="Reep D.K."/>
            <person name="Ren Q."/>
            <person name="Ross R.L."/>
            <person name="Sato P.Y."/>
            <person name="Thomas P."/>
            <person name="Tinkham L.E."/>
            <person name="Zeruth G.T."/>
        </authorList>
    </citation>
    <scope>NUCLEOTIDE SEQUENCE [LARGE SCALE GENOMIC DNA]</scope>
    <source>
        <strain>DSM 25203 / XCL-2</strain>
    </source>
</reference>
<comment type="function">
    <text evidence="1">Binds as a heterodimer with protein bS6 to the central domain of the 16S rRNA, where it helps stabilize the platform of the 30S subunit.</text>
</comment>
<comment type="subunit">
    <text evidence="1">Part of the 30S ribosomal subunit. Forms a tight heterodimer with protein bS6.</text>
</comment>
<comment type="similarity">
    <text evidence="1">Belongs to the bacterial ribosomal protein bS18 family.</text>
</comment>
<sequence>MARGFGRKKFCRFTVEGVKEIDYKDLDTLKSYITETGKIVPSRITGTSAKYQRQLSTAIKRARYLALLPYTDQHK</sequence>
<feature type="chain" id="PRO_1000003651" description="Small ribosomal subunit protein bS18">
    <location>
        <begin position="1"/>
        <end position="75"/>
    </location>
</feature>
<protein>
    <recommendedName>
        <fullName evidence="1">Small ribosomal subunit protein bS18</fullName>
    </recommendedName>
    <alternativeName>
        <fullName evidence="2">30S ribosomal protein S18</fullName>
    </alternativeName>
</protein>
<name>RS18_HYDCU</name>
<organism>
    <name type="scientific">Hydrogenovibrio crunogenus (strain DSM 25203 / XCL-2)</name>
    <name type="common">Thiomicrospira crunogena</name>
    <dbReference type="NCBI Taxonomy" id="317025"/>
    <lineage>
        <taxon>Bacteria</taxon>
        <taxon>Pseudomonadati</taxon>
        <taxon>Pseudomonadota</taxon>
        <taxon>Gammaproteobacteria</taxon>
        <taxon>Thiotrichales</taxon>
        <taxon>Piscirickettsiaceae</taxon>
        <taxon>Hydrogenovibrio</taxon>
    </lineage>
</organism>
<dbReference type="EMBL" id="CP000109">
    <property type="protein sequence ID" value="ABB41958.1"/>
    <property type="molecule type" value="Genomic_DNA"/>
</dbReference>
<dbReference type="SMR" id="Q31FW5"/>
<dbReference type="STRING" id="317025.Tcr_1363"/>
<dbReference type="KEGG" id="tcx:Tcr_1363"/>
<dbReference type="eggNOG" id="COG0238">
    <property type="taxonomic scope" value="Bacteria"/>
</dbReference>
<dbReference type="HOGENOM" id="CLU_148710_2_2_6"/>
<dbReference type="OrthoDB" id="9812008at2"/>
<dbReference type="GO" id="GO:0022627">
    <property type="term" value="C:cytosolic small ribosomal subunit"/>
    <property type="evidence" value="ECO:0007669"/>
    <property type="project" value="TreeGrafter"/>
</dbReference>
<dbReference type="GO" id="GO:0070181">
    <property type="term" value="F:small ribosomal subunit rRNA binding"/>
    <property type="evidence" value="ECO:0007669"/>
    <property type="project" value="TreeGrafter"/>
</dbReference>
<dbReference type="GO" id="GO:0003735">
    <property type="term" value="F:structural constituent of ribosome"/>
    <property type="evidence" value="ECO:0007669"/>
    <property type="project" value="InterPro"/>
</dbReference>
<dbReference type="GO" id="GO:0006412">
    <property type="term" value="P:translation"/>
    <property type="evidence" value="ECO:0007669"/>
    <property type="project" value="UniProtKB-UniRule"/>
</dbReference>
<dbReference type="FunFam" id="4.10.640.10:FF:000001">
    <property type="entry name" value="30S ribosomal protein S18"/>
    <property type="match status" value="1"/>
</dbReference>
<dbReference type="Gene3D" id="4.10.640.10">
    <property type="entry name" value="Ribosomal protein S18"/>
    <property type="match status" value="1"/>
</dbReference>
<dbReference type="HAMAP" id="MF_00270">
    <property type="entry name" value="Ribosomal_bS18"/>
    <property type="match status" value="1"/>
</dbReference>
<dbReference type="InterPro" id="IPR001648">
    <property type="entry name" value="Ribosomal_bS18"/>
</dbReference>
<dbReference type="InterPro" id="IPR018275">
    <property type="entry name" value="Ribosomal_bS18_CS"/>
</dbReference>
<dbReference type="InterPro" id="IPR036870">
    <property type="entry name" value="Ribosomal_bS18_sf"/>
</dbReference>
<dbReference type="NCBIfam" id="TIGR00165">
    <property type="entry name" value="S18"/>
    <property type="match status" value="1"/>
</dbReference>
<dbReference type="PANTHER" id="PTHR13479">
    <property type="entry name" value="30S RIBOSOMAL PROTEIN S18"/>
    <property type="match status" value="1"/>
</dbReference>
<dbReference type="PANTHER" id="PTHR13479:SF40">
    <property type="entry name" value="SMALL RIBOSOMAL SUBUNIT PROTEIN BS18M"/>
    <property type="match status" value="1"/>
</dbReference>
<dbReference type="Pfam" id="PF01084">
    <property type="entry name" value="Ribosomal_S18"/>
    <property type="match status" value="1"/>
</dbReference>
<dbReference type="PRINTS" id="PR00974">
    <property type="entry name" value="RIBOSOMALS18"/>
</dbReference>
<dbReference type="SUPFAM" id="SSF46911">
    <property type="entry name" value="Ribosomal protein S18"/>
    <property type="match status" value="1"/>
</dbReference>
<dbReference type="PROSITE" id="PS00057">
    <property type="entry name" value="RIBOSOMAL_S18"/>
    <property type="match status" value="1"/>
</dbReference>